<comment type="function">
    <text evidence="1">Involved in base excision repair of DNA damaged by oxidation or by mutagenic agents. Acts as a DNA glycosylase that recognizes and removes damaged bases. Has a preference for oxidized pyrimidines, such as thymine glycol, 5,6-dihydrouracil and 5,6-dihydrothymine. Has AP (apurinic/apyrimidinic) lyase activity and introduces nicks in the DNA strand. Cleaves the DNA backbone by beta-delta elimination to generate a single-strand break at the site of the removed base with both 3'- and 5'-phosphates.</text>
</comment>
<comment type="catalytic activity">
    <reaction evidence="1">
        <text>2'-deoxyribonucleotide-(2'-deoxyribose 5'-phosphate)-2'-deoxyribonucleotide-DNA = a 3'-end 2'-deoxyribonucleotide-(2,3-dehydro-2,3-deoxyribose 5'-phosphate)-DNA + a 5'-end 5'-phospho-2'-deoxyribonucleoside-DNA + H(+)</text>
        <dbReference type="Rhea" id="RHEA:66592"/>
        <dbReference type="Rhea" id="RHEA-COMP:13180"/>
        <dbReference type="Rhea" id="RHEA-COMP:16897"/>
        <dbReference type="Rhea" id="RHEA-COMP:17067"/>
        <dbReference type="ChEBI" id="CHEBI:15378"/>
        <dbReference type="ChEBI" id="CHEBI:136412"/>
        <dbReference type="ChEBI" id="CHEBI:157695"/>
        <dbReference type="ChEBI" id="CHEBI:167181"/>
        <dbReference type="EC" id="4.2.99.18"/>
    </reaction>
</comment>
<comment type="cofactor">
    <cofactor evidence="1">
        <name>Zn(2+)</name>
        <dbReference type="ChEBI" id="CHEBI:29105"/>
    </cofactor>
    <text evidence="1">Binds 1 zinc ion per subunit.</text>
</comment>
<comment type="similarity">
    <text evidence="1">Belongs to the FPG family.</text>
</comment>
<dbReference type="EC" id="3.2.2.-" evidence="1"/>
<dbReference type="EC" id="4.2.99.18" evidence="1"/>
<dbReference type="EMBL" id="CP001396">
    <property type="protein sequence ID" value="ACR63030.1"/>
    <property type="molecule type" value="Genomic_DNA"/>
</dbReference>
<dbReference type="RefSeq" id="WP_001113989.1">
    <property type="nucleotide sequence ID" value="NC_012759.1"/>
</dbReference>
<dbReference type="SMR" id="C4ZWI9"/>
<dbReference type="KEGG" id="ebw:BWG_0573"/>
<dbReference type="HOGENOM" id="CLU_038423_2_2_6"/>
<dbReference type="GO" id="GO:0140078">
    <property type="term" value="F:class I DNA-(apurinic or apyrimidinic site) endonuclease activity"/>
    <property type="evidence" value="ECO:0007669"/>
    <property type="project" value="UniProtKB-EC"/>
</dbReference>
<dbReference type="GO" id="GO:0003684">
    <property type="term" value="F:damaged DNA binding"/>
    <property type="evidence" value="ECO:0007669"/>
    <property type="project" value="InterPro"/>
</dbReference>
<dbReference type="GO" id="GO:0000703">
    <property type="term" value="F:oxidized pyrimidine nucleobase lesion DNA N-glycosylase activity"/>
    <property type="evidence" value="ECO:0007669"/>
    <property type="project" value="UniProtKB-UniRule"/>
</dbReference>
<dbReference type="GO" id="GO:0008270">
    <property type="term" value="F:zinc ion binding"/>
    <property type="evidence" value="ECO:0007669"/>
    <property type="project" value="UniProtKB-UniRule"/>
</dbReference>
<dbReference type="GO" id="GO:0006284">
    <property type="term" value="P:base-excision repair"/>
    <property type="evidence" value="ECO:0007669"/>
    <property type="project" value="InterPro"/>
</dbReference>
<dbReference type="CDD" id="cd08965">
    <property type="entry name" value="EcNei-like_N"/>
    <property type="match status" value="1"/>
</dbReference>
<dbReference type="FunFam" id="1.10.8.50:FF:000005">
    <property type="entry name" value="Endonuclease 8"/>
    <property type="match status" value="1"/>
</dbReference>
<dbReference type="FunFam" id="3.20.190.10:FF:000002">
    <property type="entry name" value="Endonuclease 8"/>
    <property type="match status" value="1"/>
</dbReference>
<dbReference type="Gene3D" id="1.10.8.50">
    <property type="match status" value="1"/>
</dbReference>
<dbReference type="Gene3D" id="3.20.190.10">
    <property type="entry name" value="MutM-like, N-terminal"/>
    <property type="match status" value="1"/>
</dbReference>
<dbReference type="HAMAP" id="MF_01253">
    <property type="entry name" value="Endonuclease_8"/>
    <property type="match status" value="1"/>
</dbReference>
<dbReference type="InterPro" id="IPR015886">
    <property type="entry name" value="DNA_glyclase/AP_lyase_DNA-bd"/>
</dbReference>
<dbReference type="InterPro" id="IPR015887">
    <property type="entry name" value="DNA_glyclase_Znf_dom_DNA_BS"/>
</dbReference>
<dbReference type="InterPro" id="IPR044091">
    <property type="entry name" value="EcNei-like_N"/>
</dbReference>
<dbReference type="InterPro" id="IPR023713">
    <property type="entry name" value="Endonuclease-VIII"/>
</dbReference>
<dbReference type="InterPro" id="IPR012319">
    <property type="entry name" value="FPG_cat"/>
</dbReference>
<dbReference type="InterPro" id="IPR035937">
    <property type="entry name" value="MutM-like_N-ter"/>
</dbReference>
<dbReference type="InterPro" id="IPR010979">
    <property type="entry name" value="Ribosomal_uS13-like_H2TH"/>
</dbReference>
<dbReference type="InterPro" id="IPR000214">
    <property type="entry name" value="Znf_DNA_glyclase/AP_lyase"/>
</dbReference>
<dbReference type="InterPro" id="IPR010663">
    <property type="entry name" value="Znf_FPG/IleRS"/>
</dbReference>
<dbReference type="NCBIfam" id="NF007763">
    <property type="entry name" value="PRK10445.1"/>
    <property type="match status" value="1"/>
</dbReference>
<dbReference type="PANTHER" id="PTHR42697">
    <property type="entry name" value="ENDONUCLEASE 8"/>
    <property type="match status" value="1"/>
</dbReference>
<dbReference type="PANTHER" id="PTHR42697:SF1">
    <property type="entry name" value="ENDONUCLEASE 8"/>
    <property type="match status" value="1"/>
</dbReference>
<dbReference type="Pfam" id="PF01149">
    <property type="entry name" value="Fapy_DNA_glyco"/>
    <property type="match status" value="1"/>
</dbReference>
<dbReference type="Pfam" id="PF06831">
    <property type="entry name" value="H2TH"/>
    <property type="match status" value="1"/>
</dbReference>
<dbReference type="Pfam" id="PF06827">
    <property type="entry name" value="zf-FPG_IleRS"/>
    <property type="match status" value="1"/>
</dbReference>
<dbReference type="SMART" id="SM00898">
    <property type="entry name" value="Fapy_DNA_glyco"/>
    <property type="match status" value="1"/>
</dbReference>
<dbReference type="SMART" id="SM01232">
    <property type="entry name" value="H2TH"/>
    <property type="match status" value="1"/>
</dbReference>
<dbReference type="SUPFAM" id="SSF57716">
    <property type="entry name" value="Glucocorticoid receptor-like (DNA-binding domain)"/>
    <property type="match status" value="1"/>
</dbReference>
<dbReference type="SUPFAM" id="SSF81624">
    <property type="entry name" value="N-terminal domain of MutM-like DNA repair proteins"/>
    <property type="match status" value="1"/>
</dbReference>
<dbReference type="SUPFAM" id="SSF46946">
    <property type="entry name" value="S13-like H2TH domain"/>
    <property type="match status" value="1"/>
</dbReference>
<dbReference type="PROSITE" id="PS51068">
    <property type="entry name" value="FPG_CAT"/>
    <property type="match status" value="1"/>
</dbReference>
<dbReference type="PROSITE" id="PS01242">
    <property type="entry name" value="ZF_FPG_1"/>
    <property type="match status" value="1"/>
</dbReference>
<dbReference type="PROSITE" id="PS51066">
    <property type="entry name" value="ZF_FPG_2"/>
    <property type="match status" value="1"/>
</dbReference>
<keyword id="KW-0227">DNA damage</keyword>
<keyword id="KW-0234">DNA repair</keyword>
<keyword id="KW-0238">DNA-binding</keyword>
<keyword id="KW-0326">Glycosidase</keyword>
<keyword id="KW-0378">Hydrolase</keyword>
<keyword id="KW-0456">Lyase</keyword>
<keyword id="KW-0479">Metal-binding</keyword>
<keyword id="KW-0511">Multifunctional enzyme</keyword>
<keyword id="KW-0862">Zinc</keyword>
<keyword id="KW-0863">Zinc-finger</keyword>
<gene>
    <name evidence="1" type="primary">nei</name>
    <name type="ordered locus">BWG_0573</name>
</gene>
<organism>
    <name type="scientific">Escherichia coli (strain K12 / MC4100 / BW2952)</name>
    <dbReference type="NCBI Taxonomy" id="595496"/>
    <lineage>
        <taxon>Bacteria</taxon>
        <taxon>Pseudomonadati</taxon>
        <taxon>Pseudomonadota</taxon>
        <taxon>Gammaproteobacteria</taxon>
        <taxon>Enterobacterales</taxon>
        <taxon>Enterobacteriaceae</taxon>
        <taxon>Escherichia</taxon>
    </lineage>
</organism>
<sequence>MPEGPEIRRAADNLEAAIKGKPLTDVWFAFPQLKPYQSQLIGQHVTHVETRGKALLTHFSNDLTLYSHNQLYGVWRVVDTGEEPQTTRVLRVKLQTADKTILLYSASDIEMLTPEQLTTHPFLQRVGPDVLDPNLTPEVVKERLLSPRFRNRQFAGLLLDQAFLAGLGNYLRVEILWQVGLTGNHKAKDLNAAQLDALAHALLEIPRFSYATRGQVDENKHHGALFRFKVFHRDGEPCERCGSIIEKTTLSSRPFYWCPGCQH</sequence>
<protein>
    <recommendedName>
        <fullName evidence="1">Endonuclease 8</fullName>
    </recommendedName>
    <alternativeName>
        <fullName evidence="1">DNA glycosylase/AP lyase Nei</fullName>
        <ecNumber evidence="1">3.2.2.-</ecNumber>
        <ecNumber evidence="1">4.2.99.18</ecNumber>
    </alternativeName>
    <alternativeName>
        <fullName evidence="1">DNA-(apurinic or apyrimidinic site) lyase Nei</fullName>
    </alternativeName>
    <alternativeName>
        <fullName evidence="1">Endonuclease VIII</fullName>
    </alternativeName>
</protein>
<feature type="initiator methionine" description="Removed" evidence="1">
    <location>
        <position position="1"/>
    </location>
</feature>
<feature type="chain" id="PRO_1000214115" description="Endonuclease 8">
    <location>
        <begin position="2"/>
        <end position="263"/>
    </location>
</feature>
<feature type="zinc finger region" description="FPG-type" evidence="1">
    <location>
        <begin position="229"/>
        <end position="263"/>
    </location>
</feature>
<feature type="active site" description="Schiff-base intermediate with DNA" evidence="1">
    <location>
        <position position="2"/>
    </location>
</feature>
<feature type="active site" description="Proton donor" evidence="1">
    <location>
        <position position="3"/>
    </location>
</feature>
<feature type="active site" description="Proton donor; for beta-elimination activity" evidence="1">
    <location>
        <position position="53"/>
    </location>
</feature>
<feature type="active site" description="Proton donor; for delta-elimination activity" evidence="1">
    <location>
        <position position="253"/>
    </location>
</feature>
<feature type="binding site" evidence="1">
    <location>
        <position position="70"/>
    </location>
    <ligand>
        <name>DNA</name>
        <dbReference type="ChEBI" id="CHEBI:16991"/>
    </ligand>
</feature>
<feature type="binding site" evidence="1">
    <location>
        <position position="125"/>
    </location>
    <ligand>
        <name>DNA</name>
        <dbReference type="ChEBI" id="CHEBI:16991"/>
    </ligand>
</feature>
<feature type="binding site" evidence="1">
    <location>
        <position position="169"/>
    </location>
    <ligand>
        <name>DNA</name>
        <dbReference type="ChEBI" id="CHEBI:16991"/>
    </ligand>
</feature>
<proteinExistence type="inferred from homology"/>
<evidence type="ECO:0000255" key="1">
    <source>
        <dbReference type="HAMAP-Rule" id="MF_01253"/>
    </source>
</evidence>
<reference key="1">
    <citation type="journal article" date="2009" name="J. Bacteriol.">
        <title>Genomic sequencing reveals regulatory mutations and recombinational events in the widely used MC4100 lineage of Escherichia coli K-12.</title>
        <authorList>
            <person name="Ferenci T."/>
            <person name="Zhou Z."/>
            <person name="Betteridge T."/>
            <person name="Ren Y."/>
            <person name="Liu Y."/>
            <person name="Feng L."/>
            <person name="Reeves P.R."/>
            <person name="Wang L."/>
        </authorList>
    </citation>
    <scope>NUCLEOTIDE SEQUENCE [LARGE SCALE GENOMIC DNA]</scope>
    <source>
        <strain>K12 / MC4100 / BW2952</strain>
    </source>
</reference>
<accession>C4ZWI9</accession>
<name>END8_ECOBW</name>